<accession>Q25691</accession>
<organism>
    <name type="scientific">Plasmodium falciparum</name>
    <dbReference type="NCBI Taxonomy" id="5833"/>
    <lineage>
        <taxon>Eukaryota</taxon>
        <taxon>Sar</taxon>
        <taxon>Alveolata</taxon>
        <taxon>Apicomplexa</taxon>
        <taxon>Aconoidasida</taxon>
        <taxon>Haemosporida</taxon>
        <taxon>Plasmodiidae</taxon>
        <taxon>Plasmodium</taxon>
        <taxon>Plasmodium (Laverania)</taxon>
    </lineage>
</organism>
<sequence length="494" mass="55789">MSKEVVNTKAEASRVNALAAVRNYKVCPRLEYKTISGVQGPLVIIEDVKFPKYSEIVTIHLSDNTTRQGQILEVCGKKAVIQVFEGTSGIDNKNSYVEVSGDILKMPMSDEMLGRVFNGSGKPIDKGPNILADDYLDINGNPINPQCRVYPKEMIQTGISTIDVMNSIVRGQKIPLFSAAGLPHNEIGAQICRQASLVQGKDVLDHSDDNFAVVFGAMGVNMETARYFRQDFEENGKMERVCLFLNLANDPTIERILTPRIALTTAEYLAFEKEMHVFVILTDMSSYADALREVSSAREEVPGRRGYPGYMYSDLSTIYERAGRVEGRNGSITQFPILTMPNDDITHPIPDLTGYITEGQIFVDRNLYNRQIYPPINVLPSLSRLMKSGIGHNMTRIDHPYVSDQLYSNYAIAQDVKAMKAVIGEEALSNDDILYLEFLDKFEKRFITQNTYECRDIYQSLDIAWELLRIFPEDMLKKIKTDILSKYYPRHHAN</sequence>
<gene>
    <name type="primary">VAPB</name>
</gene>
<name>VATB_PLAFA</name>
<proteinExistence type="evidence at transcript level"/>
<keyword id="KW-0375">Hydrogen ion transport</keyword>
<keyword id="KW-0406">Ion transport</keyword>
<keyword id="KW-0813">Transport</keyword>
<comment type="function">
    <text>Non-catalytic subunit of the peripheral V1 complex of vacuolar ATPase. V-ATPase is responsible for acidifying a variety of intracellular compartments in eukaryotic cells.</text>
</comment>
<comment type="subunit">
    <text>V-ATPase is a heteromultimeric enzyme composed of a peripheral catalytic V1 complex (main components: subunits A, B, C, D, E, and F) attached to an integral membrane V0 proton pore complex (main component: the proteolipid protein).</text>
</comment>
<comment type="similarity">
    <text evidence="1">Belongs to the ATPase alpha/beta chains family.</text>
</comment>
<evidence type="ECO:0000305" key="1"/>
<feature type="chain" id="PRO_0000144635" description="V-type proton ATPase subunit B">
    <location>
        <begin position="1"/>
        <end position="494"/>
    </location>
</feature>
<reference key="1">
    <citation type="journal article" date="1994" name="Mol. Biochem. Parasitol.">
        <title>Cloning and characterization of the vacuolar ATPase B subunit from Plasmodium falciparum.</title>
        <authorList>
            <person name="Karcz S.R."/>
            <person name="Herrmann V.R."/>
            <person name="Cowman A.F."/>
        </authorList>
    </citation>
    <scope>NUCLEOTIDE SEQUENCE [MRNA]</scope>
</reference>
<protein>
    <recommendedName>
        <fullName>V-type proton ATPase subunit B</fullName>
        <shortName>V-ATPase subunit B</shortName>
    </recommendedName>
    <alternativeName>
        <fullName>Vacuolar proton pump subunit B</fullName>
    </alternativeName>
</protein>
<dbReference type="EMBL" id="U03915">
    <property type="protein sequence ID" value="AAA20218.1"/>
    <property type="molecule type" value="mRNA"/>
</dbReference>
<dbReference type="SMR" id="Q25691"/>
<dbReference type="TCDB" id="3.A.2.2.10">
    <property type="family name" value="the h+- or na+-translocating f-type, v-type and a-type atpase (f-atpase) superfamily"/>
</dbReference>
<dbReference type="EnsemblProtists" id="CAD49154">
    <property type="protein sequence ID" value="CAD49154"/>
    <property type="gene ID" value="PF3D7_0406100"/>
</dbReference>
<dbReference type="VEuPathDB" id="PlasmoDB:PF3D7_0406100"/>
<dbReference type="VEuPathDB" id="PlasmoDB:Pf7G8-2_000099600"/>
<dbReference type="VEuPathDB" id="PlasmoDB:Pf7G8_040011400"/>
<dbReference type="VEuPathDB" id="PlasmoDB:PfCD01_040011200"/>
<dbReference type="VEuPathDB" id="PlasmoDB:PfDd2_040011500"/>
<dbReference type="VEuPathDB" id="PlasmoDB:PfGA01_040011100"/>
<dbReference type="VEuPathDB" id="PlasmoDB:PfGB4_040011600"/>
<dbReference type="VEuPathDB" id="PlasmoDB:PfGN01_040011500"/>
<dbReference type="VEuPathDB" id="PlasmoDB:PfHB3_040010300"/>
<dbReference type="VEuPathDB" id="PlasmoDB:PfIT_040010800"/>
<dbReference type="VEuPathDB" id="PlasmoDB:PfKE01_040012800"/>
<dbReference type="VEuPathDB" id="PlasmoDB:PfKH01_040011200"/>
<dbReference type="VEuPathDB" id="PlasmoDB:PfKH02_040011000"/>
<dbReference type="VEuPathDB" id="PlasmoDB:PfML01_040012000"/>
<dbReference type="VEuPathDB" id="PlasmoDB:PfNF135_040012000"/>
<dbReference type="VEuPathDB" id="PlasmoDB:PfNF166_040012700"/>
<dbReference type="VEuPathDB" id="PlasmoDB:PfNF54_040011800"/>
<dbReference type="VEuPathDB" id="PlasmoDB:PfSD01_070021700"/>
<dbReference type="VEuPathDB" id="PlasmoDB:PfSN01_040011200"/>
<dbReference type="VEuPathDB" id="PlasmoDB:PfTG01_040011500"/>
<dbReference type="OMA" id="EGFKIKP"/>
<dbReference type="GO" id="GO:0033180">
    <property type="term" value="C:proton-transporting V-type ATPase, V1 domain"/>
    <property type="evidence" value="ECO:0007669"/>
    <property type="project" value="InterPro"/>
</dbReference>
<dbReference type="GO" id="GO:0005524">
    <property type="term" value="F:ATP binding"/>
    <property type="evidence" value="ECO:0007669"/>
    <property type="project" value="InterPro"/>
</dbReference>
<dbReference type="GO" id="GO:0046961">
    <property type="term" value="F:proton-transporting ATPase activity, rotational mechanism"/>
    <property type="evidence" value="ECO:0007669"/>
    <property type="project" value="InterPro"/>
</dbReference>
<dbReference type="GO" id="GO:0046034">
    <property type="term" value="P:ATP metabolic process"/>
    <property type="evidence" value="ECO:0007669"/>
    <property type="project" value="InterPro"/>
</dbReference>
<dbReference type="GO" id="GO:0007035">
    <property type="term" value="P:vacuolar acidification"/>
    <property type="evidence" value="ECO:0007669"/>
    <property type="project" value="TreeGrafter"/>
</dbReference>
<dbReference type="CDD" id="cd18112">
    <property type="entry name" value="ATP-synt_V_A-type_beta_C"/>
    <property type="match status" value="1"/>
</dbReference>
<dbReference type="CDD" id="cd18118">
    <property type="entry name" value="ATP-synt_V_A-type_beta_N"/>
    <property type="match status" value="1"/>
</dbReference>
<dbReference type="CDD" id="cd01135">
    <property type="entry name" value="V_A-ATPase_B"/>
    <property type="match status" value="1"/>
</dbReference>
<dbReference type="FunFam" id="3.40.50.12240:FF:000003">
    <property type="entry name" value="V-type proton ATPase subunit B"/>
    <property type="match status" value="1"/>
</dbReference>
<dbReference type="Gene3D" id="3.40.50.12240">
    <property type="match status" value="1"/>
</dbReference>
<dbReference type="HAMAP" id="MF_00310">
    <property type="entry name" value="ATP_synth_B_arch"/>
    <property type="match status" value="1"/>
</dbReference>
<dbReference type="InterPro" id="IPR055190">
    <property type="entry name" value="ATP-synt_VA_C"/>
</dbReference>
<dbReference type="InterPro" id="IPR020003">
    <property type="entry name" value="ATPase_a/bsu_AS"/>
</dbReference>
<dbReference type="InterPro" id="IPR004100">
    <property type="entry name" value="ATPase_F1/V1/A1_a/bsu_N"/>
</dbReference>
<dbReference type="InterPro" id="IPR000194">
    <property type="entry name" value="ATPase_F1/V1/A1_a/bsu_nucl-bd"/>
</dbReference>
<dbReference type="InterPro" id="IPR005723">
    <property type="entry name" value="ATPase_V1-cplx_bsu"/>
</dbReference>
<dbReference type="InterPro" id="IPR027417">
    <property type="entry name" value="P-loop_NTPase"/>
</dbReference>
<dbReference type="InterPro" id="IPR022879">
    <property type="entry name" value="V-ATPase_su_B/beta"/>
</dbReference>
<dbReference type="NCBIfam" id="NF003235">
    <property type="entry name" value="PRK04196.1"/>
    <property type="match status" value="1"/>
</dbReference>
<dbReference type="NCBIfam" id="TIGR01040">
    <property type="entry name" value="V-ATPase_V1_B"/>
    <property type="match status" value="1"/>
</dbReference>
<dbReference type="PANTHER" id="PTHR43389">
    <property type="entry name" value="V-TYPE PROTON ATPASE SUBUNIT B"/>
    <property type="match status" value="1"/>
</dbReference>
<dbReference type="PANTHER" id="PTHR43389:SF4">
    <property type="entry name" value="V-TYPE PROTON ATPASE SUBUNIT B"/>
    <property type="match status" value="1"/>
</dbReference>
<dbReference type="Pfam" id="PF00006">
    <property type="entry name" value="ATP-synt_ab"/>
    <property type="match status" value="1"/>
</dbReference>
<dbReference type="Pfam" id="PF02874">
    <property type="entry name" value="ATP-synt_ab_N"/>
    <property type="match status" value="1"/>
</dbReference>
<dbReference type="Pfam" id="PF22919">
    <property type="entry name" value="ATP-synt_VA_C"/>
    <property type="match status" value="1"/>
</dbReference>
<dbReference type="PIRSF" id="PIRSF039114">
    <property type="entry name" value="V-ATPsynth_beta/V-ATPase_B"/>
    <property type="match status" value="1"/>
</dbReference>
<dbReference type="SUPFAM" id="SSF52540">
    <property type="entry name" value="P-loop containing nucleoside triphosphate hydrolases"/>
    <property type="match status" value="1"/>
</dbReference>
<dbReference type="PROSITE" id="PS00152">
    <property type="entry name" value="ATPASE_ALPHA_BETA"/>
    <property type="match status" value="1"/>
</dbReference>